<keyword id="KW-0012">Acyltransferase</keyword>
<keyword id="KW-0997">Cell inner membrane</keyword>
<keyword id="KW-1003">Cell membrane</keyword>
<keyword id="KW-0444">Lipid biosynthesis</keyword>
<keyword id="KW-0443">Lipid metabolism</keyword>
<keyword id="KW-0472">Membrane</keyword>
<keyword id="KW-0594">Phospholipid biosynthesis</keyword>
<keyword id="KW-1208">Phospholipid metabolism</keyword>
<keyword id="KW-0808">Transferase</keyword>
<proteinExistence type="inferred from homology"/>
<name>PLSB_YERP3</name>
<feature type="chain" id="PRO_1000060779" description="Glycerol-3-phosphate acyltransferase">
    <location>
        <begin position="1"/>
        <end position="825"/>
    </location>
</feature>
<feature type="region of interest" description="Disordered" evidence="2">
    <location>
        <begin position="803"/>
        <end position="825"/>
    </location>
</feature>
<feature type="short sequence motif" description="HXXXXD motif">
    <location>
        <begin position="304"/>
        <end position="309"/>
    </location>
</feature>
<gene>
    <name evidence="1" type="primary">plsB</name>
    <name type="ordered locus">YpsIP31758_3772</name>
</gene>
<sequence length="825" mass="93621">MSGWRKIYYKLLNLPLKLLVKSKVIPADPVSELGLDPSRPILYVLPYNSKADLLTLRAQCLAQDLPDPLIPLEIDGVQLPSHVFIENGPRVFRYYVPKQESVKLFHDYLDLHRNNPALDIQMLPVSVMFGRSPGREGHGTPHLRVLNGVQKFFAVLWLGRDSFVRFSTTVSLRRMASEHGTDKTIAHKLARVARMHFSRQRLAAVGPSLPARQDLFKKLLASKAIEKAVADEARSKKISHEKAQQNAITLMEEIAANFSYEAVRLSDRVLSWTWNRLYQGINVHNAERVRQLAQDGHEIVYVPCHRSHMDYLLLSYVLYHQGLVPPHIAAGINLNFWPAGPIFRRLGAFFIRRTFKGNKLYSTVFREYLGELFTRGYSVEYFVEGGRSRTGRLLEPKTGTLSMTIQAMLRGGTRPITLVPIYIGYEHVMEVGTYAKELRGAIKEKENLLQMLRGLRKLRNLGQGYVNFGEPLPLTTYLNTHVPQWRDAIDPIEAQRPSWLTPAVNDLANQIMVRINNAAAANAMNLCSTALLASRQRSLTREQLLEQLDCYLQLMRNAPYAKDTTVPDKTPEELLNHALNMNKFEVEKDTIGDIIILPREQAVLMTYYRNNIQHLLILPSLIASMVMYHRRITRTELLHKISMIYPMLKAELFLHYSKEQLPETLDTLIDELARQQLICDKGSELVLNPARIRPLQLLAAGVRETLQRYAITLSLLSATPSINRGALEKESRIMAQRLSVLHGINAPEFFDKAVFSTLVATLREEGYISDSGDAIQEHTLEVYNMLSALMTPEVKLTIESVSMPAETSNQPEAPETPEPEGKTES</sequence>
<organism>
    <name type="scientific">Yersinia pseudotuberculosis serotype O:1b (strain IP 31758)</name>
    <dbReference type="NCBI Taxonomy" id="349747"/>
    <lineage>
        <taxon>Bacteria</taxon>
        <taxon>Pseudomonadati</taxon>
        <taxon>Pseudomonadota</taxon>
        <taxon>Gammaproteobacteria</taxon>
        <taxon>Enterobacterales</taxon>
        <taxon>Yersiniaceae</taxon>
        <taxon>Yersinia</taxon>
    </lineage>
</organism>
<comment type="catalytic activity">
    <reaction evidence="1">
        <text>sn-glycerol 3-phosphate + an acyl-CoA = a 1-acyl-sn-glycero-3-phosphate + CoA</text>
        <dbReference type="Rhea" id="RHEA:15325"/>
        <dbReference type="ChEBI" id="CHEBI:57287"/>
        <dbReference type="ChEBI" id="CHEBI:57597"/>
        <dbReference type="ChEBI" id="CHEBI:57970"/>
        <dbReference type="ChEBI" id="CHEBI:58342"/>
        <dbReference type="EC" id="2.3.1.15"/>
    </reaction>
</comment>
<comment type="pathway">
    <text evidence="1">Phospholipid metabolism; CDP-diacylglycerol biosynthesis; CDP-diacylglycerol from sn-glycerol 3-phosphate: step 1/3.</text>
</comment>
<comment type="subcellular location">
    <subcellularLocation>
        <location evidence="1">Cell inner membrane</location>
        <topology evidence="1">Peripheral membrane protein</topology>
        <orientation evidence="1">Cytoplasmic side</orientation>
    </subcellularLocation>
</comment>
<comment type="domain">
    <text evidence="1">The HXXXXD motif is essential for acyltransferase activity and may constitute the binding site for the phosphate moiety of the glycerol-3-phosphate.</text>
</comment>
<comment type="similarity">
    <text evidence="1">Belongs to the GPAT/DAPAT family.</text>
</comment>
<reference key="1">
    <citation type="journal article" date="2007" name="PLoS Genet.">
        <title>The complete genome sequence of Yersinia pseudotuberculosis IP31758, the causative agent of Far East scarlet-like fever.</title>
        <authorList>
            <person name="Eppinger M."/>
            <person name="Rosovitz M.J."/>
            <person name="Fricke W.F."/>
            <person name="Rasko D.A."/>
            <person name="Kokorina G."/>
            <person name="Fayolle C."/>
            <person name="Lindler L.E."/>
            <person name="Carniel E."/>
            <person name="Ravel J."/>
        </authorList>
    </citation>
    <scope>NUCLEOTIDE SEQUENCE [LARGE SCALE GENOMIC DNA]</scope>
    <source>
        <strain>IP 31758</strain>
    </source>
</reference>
<evidence type="ECO:0000255" key="1">
    <source>
        <dbReference type="HAMAP-Rule" id="MF_00393"/>
    </source>
</evidence>
<evidence type="ECO:0000256" key="2">
    <source>
        <dbReference type="SAM" id="MobiDB-lite"/>
    </source>
</evidence>
<protein>
    <recommendedName>
        <fullName evidence="1">Glycerol-3-phosphate acyltransferase</fullName>
        <shortName evidence="1">GPAT</shortName>
        <ecNumber evidence="1">2.3.1.15</ecNumber>
    </recommendedName>
</protein>
<dbReference type="EC" id="2.3.1.15" evidence="1"/>
<dbReference type="EMBL" id="CP000720">
    <property type="protein sequence ID" value="ABS45813.1"/>
    <property type="molecule type" value="Genomic_DNA"/>
</dbReference>
<dbReference type="RefSeq" id="WP_002214644.1">
    <property type="nucleotide sequence ID" value="NC_009708.1"/>
</dbReference>
<dbReference type="SMR" id="A7FN98"/>
<dbReference type="GeneID" id="57974292"/>
<dbReference type="KEGG" id="ypi:YpsIP31758_3772"/>
<dbReference type="HOGENOM" id="CLU_015407_0_0_6"/>
<dbReference type="UniPathway" id="UPA00557">
    <property type="reaction ID" value="UER00612"/>
</dbReference>
<dbReference type="Proteomes" id="UP000002412">
    <property type="component" value="Chromosome"/>
</dbReference>
<dbReference type="GO" id="GO:0005886">
    <property type="term" value="C:plasma membrane"/>
    <property type="evidence" value="ECO:0007669"/>
    <property type="project" value="UniProtKB-SubCell"/>
</dbReference>
<dbReference type="GO" id="GO:0004366">
    <property type="term" value="F:glycerol-3-phosphate O-acyltransferase activity"/>
    <property type="evidence" value="ECO:0007669"/>
    <property type="project" value="UniProtKB-UniRule"/>
</dbReference>
<dbReference type="GO" id="GO:0016024">
    <property type="term" value="P:CDP-diacylglycerol biosynthetic process"/>
    <property type="evidence" value="ECO:0007669"/>
    <property type="project" value="UniProtKB-UniRule"/>
</dbReference>
<dbReference type="GO" id="GO:0006631">
    <property type="term" value="P:fatty acid metabolic process"/>
    <property type="evidence" value="ECO:0007669"/>
    <property type="project" value="TreeGrafter"/>
</dbReference>
<dbReference type="CDD" id="cd07993">
    <property type="entry name" value="LPLAT_DHAPAT-like"/>
    <property type="match status" value="1"/>
</dbReference>
<dbReference type="HAMAP" id="MF_00393">
    <property type="entry name" value="Glyc3P_acyltrans"/>
    <property type="match status" value="1"/>
</dbReference>
<dbReference type="InterPro" id="IPR022284">
    <property type="entry name" value="GPAT/DHAPAT"/>
</dbReference>
<dbReference type="InterPro" id="IPR045520">
    <property type="entry name" value="GPAT/DHAPAT_C"/>
</dbReference>
<dbReference type="InterPro" id="IPR041728">
    <property type="entry name" value="GPAT/DHAPAT_LPLAT"/>
</dbReference>
<dbReference type="InterPro" id="IPR028354">
    <property type="entry name" value="GPAT_PlsB"/>
</dbReference>
<dbReference type="InterPro" id="IPR002123">
    <property type="entry name" value="Plipid/glycerol_acylTrfase"/>
</dbReference>
<dbReference type="NCBIfam" id="TIGR03703">
    <property type="entry name" value="plsB"/>
    <property type="match status" value="1"/>
</dbReference>
<dbReference type="NCBIfam" id="NF003441">
    <property type="entry name" value="PRK04974.1"/>
    <property type="match status" value="1"/>
</dbReference>
<dbReference type="PANTHER" id="PTHR12563:SF17">
    <property type="entry name" value="DIHYDROXYACETONE PHOSPHATE ACYLTRANSFERASE"/>
    <property type="match status" value="1"/>
</dbReference>
<dbReference type="PANTHER" id="PTHR12563">
    <property type="entry name" value="GLYCEROL-3-PHOSPHATE ACYLTRANSFERASE"/>
    <property type="match status" value="1"/>
</dbReference>
<dbReference type="Pfam" id="PF01553">
    <property type="entry name" value="Acyltransferase"/>
    <property type="match status" value="1"/>
</dbReference>
<dbReference type="Pfam" id="PF19277">
    <property type="entry name" value="GPAT_C"/>
    <property type="match status" value="1"/>
</dbReference>
<dbReference type="PIRSF" id="PIRSF500064">
    <property type="entry name" value="GPAT"/>
    <property type="match status" value="1"/>
</dbReference>
<dbReference type="PIRSF" id="PIRSF000437">
    <property type="entry name" value="GPAT_DHAPAT"/>
    <property type="match status" value="1"/>
</dbReference>
<dbReference type="SMART" id="SM00563">
    <property type="entry name" value="PlsC"/>
    <property type="match status" value="1"/>
</dbReference>
<dbReference type="SUPFAM" id="SSF69593">
    <property type="entry name" value="Glycerol-3-phosphate (1)-acyltransferase"/>
    <property type="match status" value="1"/>
</dbReference>
<accession>A7FN98</accession>